<name>PNCB_SALCH</name>
<evidence type="ECO:0000255" key="1">
    <source>
        <dbReference type="HAMAP-Rule" id="MF_00570"/>
    </source>
</evidence>
<evidence type="ECO:0000305" key="2"/>
<keyword id="KW-0436">Ligase</keyword>
<keyword id="KW-0597">Phosphoprotein</keyword>
<keyword id="KW-0662">Pyridine nucleotide biosynthesis</keyword>
<protein>
    <recommendedName>
        <fullName evidence="1">Nicotinate phosphoribosyltransferase</fullName>
        <shortName evidence="1">NAPRTase</shortName>
        <ecNumber evidence="1">6.3.4.21</ecNumber>
    </recommendedName>
</protein>
<accession>Q57QZ3</accession>
<gene>
    <name evidence="1" type="primary">pncB</name>
    <name type="ordered locus">SCH_0962</name>
</gene>
<comment type="function">
    <text evidence="1">Catalyzes the synthesis of beta-nicotinate D-ribonucleotide from nicotinate and 5-phospho-D-ribose 1-phosphate at the expense of ATP.</text>
</comment>
<comment type="catalytic activity">
    <reaction evidence="1">
        <text>nicotinate + 5-phospho-alpha-D-ribose 1-diphosphate + ATP + H2O = nicotinate beta-D-ribonucleotide + ADP + phosphate + diphosphate</text>
        <dbReference type="Rhea" id="RHEA:36163"/>
        <dbReference type="ChEBI" id="CHEBI:15377"/>
        <dbReference type="ChEBI" id="CHEBI:30616"/>
        <dbReference type="ChEBI" id="CHEBI:32544"/>
        <dbReference type="ChEBI" id="CHEBI:33019"/>
        <dbReference type="ChEBI" id="CHEBI:43474"/>
        <dbReference type="ChEBI" id="CHEBI:57502"/>
        <dbReference type="ChEBI" id="CHEBI:58017"/>
        <dbReference type="ChEBI" id="CHEBI:456216"/>
        <dbReference type="EC" id="6.3.4.21"/>
    </reaction>
</comment>
<comment type="pathway">
    <text evidence="1">Cofactor biosynthesis; NAD(+) biosynthesis; nicotinate D-ribonucleotide from nicotinate: step 1/1.</text>
</comment>
<comment type="PTM">
    <text evidence="1">Transiently phosphorylated on a His residue during the reaction cycle. Phosphorylation strongly increases the affinity for substrates and increases the rate of nicotinate D-ribonucleotide production. Dephosphorylation regenerates the low-affinity form of the enzyme, leading to product release.</text>
</comment>
<comment type="similarity">
    <text evidence="1">Belongs to the NAPRTase family.</text>
</comment>
<comment type="sequence caution" evidence="2">
    <conflict type="erroneous initiation">
        <sequence resource="EMBL-CDS" id="AAX64868"/>
    </conflict>
    <text>Extended N-terminus.</text>
</comment>
<proteinExistence type="inferred from homology"/>
<dbReference type="EC" id="6.3.4.21" evidence="1"/>
<dbReference type="EMBL" id="AE017220">
    <property type="protein sequence ID" value="AAX64868.1"/>
    <property type="status" value="ALT_INIT"/>
    <property type="molecule type" value="Genomic_DNA"/>
</dbReference>
<dbReference type="RefSeq" id="WP_024131270.1">
    <property type="nucleotide sequence ID" value="NC_006905.1"/>
</dbReference>
<dbReference type="SMR" id="Q57QZ3"/>
<dbReference type="KEGG" id="sec:SCH_0962"/>
<dbReference type="HOGENOM" id="CLU_030991_1_0_6"/>
<dbReference type="UniPathway" id="UPA00253">
    <property type="reaction ID" value="UER00457"/>
</dbReference>
<dbReference type="Proteomes" id="UP000000538">
    <property type="component" value="Chromosome"/>
</dbReference>
<dbReference type="GO" id="GO:0005829">
    <property type="term" value="C:cytosol"/>
    <property type="evidence" value="ECO:0007669"/>
    <property type="project" value="TreeGrafter"/>
</dbReference>
<dbReference type="GO" id="GO:0004516">
    <property type="term" value="F:nicotinate phosphoribosyltransferase activity"/>
    <property type="evidence" value="ECO:0007669"/>
    <property type="project" value="UniProtKB-UniRule"/>
</dbReference>
<dbReference type="GO" id="GO:0034355">
    <property type="term" value="P:NAD biosynthetic process via the salvage pathway"/>
    <property type="evidence" value="ECO:0007669"/>
    <property type="project" value="TreeGrafter"/>
</dbReference>
<dbReference type="CDD" id="cd01401">
    <property type="entry name" value="PncB_like"/>
    <property type="match status" value="1"/>
</dbReference>
<dbReference type="FunFam" id="3.20.140.10:FF:000001">
    <property type="entry name" value="Nicotinate phosphoribosyltransferase"/>
    <property type="match status" value="1"/>
</dbReference>
<dbReference type="Gene3D" id="3.20.140.10">
    <property type="entry name" value="nicotinate phosphoribosyltransferase"/>
    <property type="match status" value="1"/>
</dbReference>
<dbReference type="HAMAP" id="MF_00570">
    <property type="entry name" value="NAPRTase"/>
    <property type="match status" value="1"/>
</dbReference>
<dbReference type="InterPro" id="IPR041525">
    <property type="entry name" value="N/Namide_PRibTrfase"/>
</dbReference>
<dbReference type="InterPro" id="IPR040727">
    <property type="entry name" value="NAPRTase_N"/>
</dbReference>
<dbReference type="InterPro" id="IPR006406">
    <property type="entry name" value="Nic_PRibTrfase"/>
</dbReference>
<dbReference type="InterPro" id="IPR007229">
    <property type="entry name" value="Nic_PRibTrfase-Fam"/>
</dbReference>
<dbReference type="InterPro" id="IPR036068">
    <property type="entry name" value="Nicotinate_pribotase-like_C"/>
</dbReference>
<dbReference type="NCBIfam" id="TIGR01514">
    <property type="entry name" value="NAPRTase"/>
    <property type="match status" value="1"/>
</dbReference>
<dbReference type="NCBIfam" id="NF003704">
    <property type="entry name" value="PRK05321.1"/>
    <property type="match status" value="1"/>
</dbReference>
<dbReference type="PANTHER" id="PTHR11098">
    <property type="entry name" value="NICOTINATE PHOSPHORIBOSYLTRANSFERASE"/>
    <property type="match status" value="1"/>
</dbReference>
<dbReference type="PANTHER" id="PTHR11098:SF1">
    <property type="entry name" value="NICOTINATE PHOSPHORIBOSYLTRANSFERASE"/>
    <property type="match status" value="1"/>
</dbReference>
<dbReference type="Pfam" id="PF04095">
    <property type="entry name" value="NAPRTase"/>
    <property type="match status" value="1"/>
</dbReference>
<dbReference type="Pfam" id="PF17767">
    <property type="entry name" value="NAPRTase_N"/>
    <property type="match status" value="1"/>
</dbReference>
<dbReference type="PIRSF" id="PIRSF000484">
    <property type="entry name" value="NAPRT"/>
    <property type="match status" value="1"/>
</dbReference>
<dbReference type="SUPFAM" id="SSF51690">
    <property type="entry name" value="Nicotinate/Quinolinate PRTase C-terminal domain-like"/>
    <property type="match status" value="1"/>
</dbReference>
<dbReference type="SUPFAM" id="SSF54675">
    <property type="entry name" value="Nicotinate/Quinolinate PRTase N-terminal domain-like"/>
    <property type="match status" value="1"/>
</dbReference>
<reference key="1">
    <citation type="journal article" date="2005" name="Nucleic Acids Res.">
        <title>The genome sequence of Salmonella enterica serovar Choleraesuis, a highly invasive and resistant zoonotic pathogen.</title>
        <authorList>
            <person name="Chiu C.-H."/>
            <person name="Tang P."/>
            <person name="Chu C."/>
            <person name="Hu S."/>
            <person name="Bao Q."/>
            <person name="Yu J."/>
            <person name="Chou Y.-Y."/>
            <person name="Wang H.-S."/>
            <person name="Lee Y.-S."/>
        </authorList>
    </citation>
    <scope>NUCLEOTIDE SEQUENCE [LARGE SCALE GENOMIC DNA]</scope>
    <source>
        <strain>SC-B67</strain>
    </source>
</reference>
<organism>
    <name type="scientific">Salmonella choleraesuis (strain SC-B67)</name>
    <dbReference type="NCBI Taxonomy" id="321314"/>
    <lineage>
        <taxon>Bacteria</taxon>
        <taxon>Pseudomonadati</taxon>
        <taxon>Pseudomonadota</taxon>
        <taxon>Gammaproteobacteria</taxon>
        <taxon>Enterobacterales</taxon>
        <taxon>Enterobacteriaceae</taxon>
        <taxon>Salmonella</taxon>
    </lineage>
</organism>
<sequence>MTQFASPVLHSLLDTDAYKLHMQQAVFHHYYDVQVAAEFRCRDDDLLGIYADAIREQVDAMQHLRLQEDEFQWLSGLPFFKPDYLNWLREFRYNPAQVCVTNDNGKLNIRLTGPWREVIMWEVPLLAVISELVHHYRSPNAGVDQALDALESKLVDFTALTANLDMSRFHLMDFGTRRRFSREVQQAIVKRLQQESWFVGTSNYDLARRLALTPMGTQAHEWFQAHQQISPDLATSQRAALAAWLNEYPDQLGIALTDCITMDAFLRDFGIEFASRYQGLRHDSGDPVAWGEKAIAHYEKLGIDPLTKTLVFSDNLDLPKAVELYRHFASRVQLSFGIGTRLTCDIPQVKPLNIVIKLVECNGKPVAKLSDSPGKTICHDKAFVRALRKAFDLPQVRKAS</sequence>
<feature type="chain" id="PRO_0000205843" description="Nicotinate phosphoribosyltransferase">
    <location>
        <begin position="1"/>
        <end position="400"/>
    </location>
</feature>
<feature type="modified residue" description="Phosphohistidine; by autocatalysis" evidence="1">
    <location>
        <position position="220"/>
    </location>
</feature>